<evidence type="ECO:0000255" key="1">
    <source>
        <dbReference type="HAMAP-Rule" id="MF_00436"/>
    </source>
</evidence>
<evidence type="ECO:0000255" key="2">
    <source>
        <dbReference type="PROSITE-ProRule" id="PRU01346"/>
    </source>
</evidence>
<keyword id="KW-1185">Reference proteome</keyword>
<keyword id="KW-0694">RNA-binding</keyword>
<keyword id="KW-0346">Stress response</keyword>
<gene>
    <name evidence="1" type="primary">hfq</name>
    <name type="ordered locus">BCI_0581</name>
</gene>
<proteinExistence type="inferred from homology"/>
<accession>Q1LSQ5</accession>
<name>HFQ_BAUCH</name>
<dbReference type="EMBL" id="CP000238">
    <property type="protein sequence ID" value="ABF14247.1"/>
    <property type="molecule type" value="Genomic_DNA"/>
</dbReference>
<dbReference type="RefSeq" id="WP_011520742.1">
    <property type="nucleotide sequence ID" value="NC_007984.1"/>
</dbReference>
<dbReference type="SMR" id="Q1LSQ5"/>
<dbReference type="STRING" id="374463.BCI_0581"/>
<dbReference type="KEGG" id="bci:BCI_0581"/>
<dbReference type="HOGENOM" id="CLU_113688_2_2_6"/>
<dbReference type="OrthoDB" id="9799751at2"/>
<dbReference type="Proteomes" id="UP000002427">
    <property type="component" value="Chromosome"/>
</dbReference>
<dbReference type="GO" id="GO:0005829">
    <property type="term" value="C:cytosol"/>
    <property type="evidence" value="ECO:0007669"/>
    <property type="project" value="TreeGrafter"/>
</dbReference>
<dbReference type="GO" id="GO:0003723">
    <property type="term" value="F:RNA binding"/>
    <property type="evidence" value="ECO:0007669"/>
    <property type="project" value="UniProtKB-UniRule"/>
</dbReference>
<dbReference type="GO" id="GO:0006355">
    <property type="term" value="P:regulation of DNA-templated transcription"/>
    <property type="evidence" value="ECO:0007669"/>
    <property type="project" value="InterPro"/>
</dbReference>
<dbReference type="GO" id="GO:0043487">
    <property type="term" value="P:regulation of RNA stability"/>
    <property type="evidence" value="ECO:0007669"/>
    <property type="project" value="TreeGrafter"/>
</dbReference>
<dbReference type="GO" id="GO:0045974">
    <property type="term" value="P:regulation of translation, ncRNA-mediated"/>
    <property type="evidence" value="ECO:0007669"/>
    <property type="project" value="TreeGrafter"/>
</dbReference>
<dbReference type="CDD" id="cd01716">
    <property type="entry name" value="Hfq"/>
    <property type="match status" value="1"/>
</dbReference>
<dbReference type="FunFam" id="2.30.30.100:FF:000001">
    <property type="entry name" value="RNA-binding protein Hfq"/>
    <property type="match status" value="1"/>
</dbReference>
<dbReference type="Gene3D" id="2.30.30.100">
    <property type="match status" value="1"/>
</dbReference>
<dbReference type="HAMAP" id="MF_00436">
    <property type="entry name" value="Hfq"/>
    <property type="match status" value="1"/>
</dbReference>
<dbReference type="InterPro" id="IPR005001">
    <property type="entry name" value="Hfq"/>
</dbReference>
<dbReference type="InterPro" id="IPR010920">
    <property type="entry name" value="LSM_dom_sf"/>
</dbReference>
<dbReference type="InterPro" id="IPR047575">
    <property type="entry name" value="Sm"/>
</dbReference>
<dbReference type="NCBIfam" id="TIGR02383">
    <property type="entry name" value="Hfq"/>
    <property type="match status" value="1"/>
</dbReference>
<dbReference type="NCBIfam" id="NF001602">
    <property type="entry name" value="PRK00395.1"/>
    <property type="match status" value="1"/>
</dbReference>
<dbReference type="PANTHER" id="PTHR34772">
    <property type="entry name" value="RNA-BINDING PROTEIN HFQ"/>
    <property type="match status" value="1"/>
</dbReference>
<dbReference type="PANTHER" id="PTHR34772:SF1">
    <property type="entry name" value="RNA-BINDING PROTEIN HFQ"/>
    <property type="match status" value="1"/>
</dbReference>
<dbReference type="Pfam" id="PF17209">
    <property type="entry name" value="Hfq"/>
    <property type="match status" value="1"/>
</dbReference>
<dbReference type="SUPFAM" id="SSF50182">
    <property type="entry name" value="Sm-like ribonucleoproteins"/>
    <property type="match status" value="1"/>
</dbReference>
<dbReference type="PROSITE" id="PS52002">
    <property type="entry name" value="SM"/>
    <property type="match status" value="1"/>
</dbReference>
<organism>
    <name type="scientific">Baumannia cicadellinicola subsp. Homalodisca coagulata</name>
    <dbReference type="NCBI Taxonomy" id="374463"/>
    <lineage>
        <taxon>Bacteria</taxon>
        <taxon>Pseudomonadati</taxon>
        <taxon>Pseudomonadota</taxon>
        <taxon>Gammaproteobacteria</taxon>
        <taxon>Candidatus Palibaumannia</taxon>
    </lineage>
</organism>
<sequence length="86" mass="9844">MAQGQSLQDIFLNVLRRERIQVSIYLFNGIKLQGHIESFDQFVIVLKNTISQMVYKHAVSTIVPSKFVSHYANNSSNYSNHSGDRN</sequence>
<reference key="1">
    <citation type="journal article" date="2006" name="PLoS Biol.">
        <title>Metabolic complementarity and genomics of the dual bacterial symbiosis of sharpshooters.</title>
        <authorList>
            <person name="Wu D."/>
            <person name="Daugherty S.C."/>
            <person name="Van Aken S.E."/>
            <person name="Pai G.H."/>
            <person name="Watkins K.L."/>
            <person name="Khouri H."/>
            <person name="Tallon L.J."/>
            <person name="Zaborsky J.M."/>
            <person name="Dunbar H.E."/>
            <person name="Tran P.L."/>
            <person name="Moran N.A."/>
            <person name="Eisen J.A."/>
        </authorList>
    </citation>
    <scope>NUCLEOTIDE SEQUENCE [LARGE SCALE GENOMIC DNA]</scope>
</reference>
<protein>
    <recommendedName>
        <fullName evidence="1">RNA-binding protein Hfq</fullName>
    </recommendedName>
</protein>
<feature type="chain" id="PRO_0000265139" description="RNA-binding protein Hfq">
    <location>
        <begin position="1"/>
        <end position="86"/>
    </location>
</feature>
<feature type="domain" description="Sm" evidence="2">
    <location>
        <begin position="9"/>
        <end position="68"/>
    </location>
</feature>
<comment type="function">
    <text evidence="1">RNA chaperone that binds small regulatory RNA (sRNAs) and mRNAs to facilitate mRNA translational regulation in response to envelope stress, environmental stress and changes in metabolite concentrations. Also binds with high specificity to tRNAs.</text>
</comment>
<comment type="subunit">
    <text evidence="1">Homohexamer.</text>
</comment>
<comment type="similarity">
    <text evidence="1">Belongs to the Hfq family.</text>
</comment>